<name>NLTP1_PRUAR</name>
<sequence length="91" mass="9179">ITCGQVSSSLAPCIGYVRGGGAVPPACCNGIRNVNNLARTTPDRRTACNCLKQLSGSISGVNPNNAAALPGKCGVNIPYKISASTNCATVK</sequence>
<evidence type="ECO:0000250" key="1"/>
<evidence type="ECO:0000305" key="2"/>
<dbReference type="SMR" id="P81651"/>
<dbReference type="Allergome" id="3447">
    <property type="allergen name" value="Pru ar 3.0101"/>
</dbReference>
<dbReference type="Allergome" id="596">
    <property type="allergen name" value="Pru ar 3"/>
</dbReference>
<dbReference type="GO" id="GO:0008289">
    <property type="term" value="F:lipid binding"/>
    <property type="evidence" value="ECO:0007669"/>
    <property type="project" value="UniProtKB-KW"/>
</dbReference>
<dbReference type="GO" id="GO:0006869">
    <property type="term" value="P:lipid transport"/>
    <property type="evidence" value="ECO:0007669"/>
    <property type="project" value="InterPro"/>
</dbReference>
<dbReference type="CDD" id="cd01960">
    <property type="entry name" value="nsLTP1"/>
    <property type="match status" value="1"/>
</dbReference>
<dbReference type="FunFam" id="1.10.110.10:FF:000002">
    <property type="entry name" value="Non-specific lipid-transfer protein"/>
    <property type="match status" value="1"/>
</dbReference>
<dbReference type="Gene3D" id="1.10.110.10">
    <property type="entry name" value="Plant lipid-transfer and hydrophobic proteins"/>
    <property type="match status" value="1"/>
</dbReference>
<dbReference type="InterPro" id="IPR036312">
    <property type="entry name" value="Bifun_inhib/LTP/seed_sf"/>
</dbReference>
<dbReference type="InterPro" id="IPR016140">
    <property type="entry name" value="Bifunc_inhib/LTP/seed_store"/>
</dbReference>
<dbReference type="InterPro" id="IPR000528">
    <property type="entry name" value="Plant_nsLTP"/>
</dbReference>
<dbReference type="PANTHER" id="PTHR33076">
    <property type="entry name" value="NON-SPECIFIC LIPID-TRANSFER PROTEIN 2-RELATED"/>
    <property type="match status" value="1"/>
</dbReference>
<dbReference type="Pfam" id="PF00234">
    <property type="entry name" value="Tryp_alpha_amyl"/>
    <property type="match status" value="1"/>
</dbReference>
<dbReference type="PRINTS" id="PR00382">
    <property type="entry name" value="LIPIDTRNSFER"/>
</dbReference>
<dbReference type="SMART" id="SM00499">
    <property type="entry name" value="AAI"/>
    <property type="match status" value="1"/>
</dbReference>
<dbReference type="SUPFAM" id="SSF47699">
    <property type="entry name" value="Bifunctional inhibitor/lipid-transfer protein/seed storage 2S albumin"/>
    <property type="match status" value="1"/>
</dbReference>
<dbReference type="PROSITE" id="PS00597">
    <property type="entry name" value="PLANT_LTP"/>
    <property type="match status" value="1"/>
</dbReference>
<organism>
    <name type="scientific">Prunus armeniaca</name>
    <name type="common">Apricot</name>
    <name type="synonym">Armeniaca vulgaris</name>
    <dbReference type="NCBI Taxonomy" id="36596"/>
    <lineage>
        <taxon>Eukaryota</taxon>
        <taxon>Viridiplantae</taxon>
        <taxon>Streptophyta</taxon>
        <taxon>Embryophyta</taxon>
        <taxon>Tracheophyta</taxon>
        <taxon>Spermatophyta</taxon>
        <taxon>Magnoliopsida</taxon>
        <taxon>eudicotyledons</taxon>
        <taxon>Gunneridae</taxon>
        <taxon>Pentapetalae</taxon>
        <taxon>rosids</taxon>
        <taxon>fabids</taxon>
        <taxon>Rosales</taxon>
        <taxon>Rosaceae</taxon>
        <taxon>Amygdaloideae</taxon>
        <taxon>Amygdaleae</taxon>
        <taxon>Prunus</taxon>
    </lineage>
</organism>
<accession>P81651</accession>
<proteinExistence type="evidence at protein level"/>
<comment type="function">
    <text>Plant non-specific lipid-transfer proteins transfer phospholipids as well as galactolipids across membranes. May play a role in wax or cutin deposition in the cell walls of expanding epidermal cells and certain secretory tissues.</text>
</comment>
<comment type="allergen">
    <text>Causes an allergic reaction in human.</text>
</comment>
<comment type="similarity">
    <text evidence="2">Belongs to the plant LTP family.</text>
</comment>
<keyword id="KW-0020">Allergen</keyword>
<keyword id="KW-0903">Direct protein sequencing</keyword>
<keyword id="KW-1015">Disulfide bond</keyword>
<keyword id="KW-0446">Lipid-binding</keyword>
<keyword id="KW-0813">Transport</keyword>
<reference key="1">
    <citation type="journal article" date="2001" name="J. Chromatogr. B">
        <title>Determination of the primary structure of two lipid transfer proteins from apricot (Prunus armeniaca).</title>
        <authorList>
            <person name="Conti A."/>
            <person name="Fortunato D."/>
            <person name="Ortolani C."/>
            <person name="Giuffrida M.G."/>
            <person name="Pravettoni V."/>
            <person name="Napolitano L."/>
            <person name="Farioli L."/>
            <person name="Perono Garoffo L."/>
            <person name="Trambaioli C."/>
            <person name="Pastorello E.A."/>
        </authorList>
    </citation>
    <scope>PROTEIN SEQUENCE</scope>
</reference>
<reference key="2">
    <citation type="submission" date="1999-01" db="UniProtKB">
        <title>The major allergen of apricot (Prunus armeniaca) is a lipid transfer protein.</title>
        <authorList>
            <person name="Conti A."/>
            <person name="Baroglio C."/>
            <person name="Monza M."/>
            <person name="Ortolani C."/>
            <person name="Scibola E."/>
            <person name="Giuffrida M.G."/>
            <person name="Fortunato D."/>
            <person name="Farioli L."/>
            <person name="Pravettoni V."/>
            <person name="Ansaloni R."/>
            <person name="Napolitano L."/>
            <person name="Pastorello E.A."/>
        </authorList>
    </citation>
    <scope>PROTEIN SEQUENCE OF 1-34</scope>
</reference>
<protein>
    <recommendedName>
        <fullName>Non-specific lipid-transfer protein 1</fullName>
        <shortName>LTP 1</shortName>
    </recommendedName>
    <alternativeName>
        <fullName>Major allergen Pru ar 3</fullName>
    </alternativeName>
    <allergenName>Pur ar 3</allergenName>
</protein>
<feature type="chain" id="PRO_0000153877" description="Non-specific lipid-transfer protein 1">
    <location>
        <begin position="1"/>
        <end position="91"/>
    </location>
</feature>
<feature type="disulfide bond" evidence="1">
    <location>
        <begin position="3"/>
        <end position="50"/>
    </location>
</feature>
<feature type="disulfide bond" evidence="1">
    <location>
        <begin position="13"/>
        <end position="27"/>
    </location>
</feature>
<feature type="disulfide bond" evidence="1">
    <location>
        <begin position="28"/>
        <end position="73"/>
    </location>
</feature>
<feature type="disulfide bond" evidence="1">
    <location>
        <begin position="48"/>
        <end position="87"/>
    </location>
</feature>